<keyword id="KW-0066">ATP synthesis</keyword>
<keyword id="KW-0997">Cell inner membrane</keyword>
<keyword id="KW-1003">Cell membrane</keyword>
<keyword id="KW-0138">CF(0)</keyword>
<keyword id="KW-0375">Hydrogen ion transport</keyword>
<keyword id="KW-0406">Ion transport</keyword>
<keyword id="KW-0472">Membrane</keyword>
<keyword id="KW-0812">Transmembrane</keyword>
<keyword id="KW-1133">Transmembrane helix</keyword>
<keyword id="KW-0813">Transport</keyword>
<organism>
    <name type="scientific">Xylella fastidiosa (strain 9a5c)</name>
    <dbReference type="NCBI Taxonomy" id="160492"/>
    <lineage>
        <taxon>Bacteria</taxon>
        <taxon>Pseudomonadati</taxon>
        <taxon>Pseudomonadota</taxon>
        <taxon>Gammaproteobacteria</taxon>
        <taxon>Lysobacterales</taxon>
        <taxon>Lysobacteraceae</taxon>
        <taxon>Xylella</taxon>
    </lineage>
</organism>
<gene>
    <name evidence="1" type="primary">atpF</name>
    <name type="ordered locus">XF_1147</name>
</gene>
<protein>
    <recommendedName>
        <fullName evidence="1">ATP synthase subunit b</fullName>
    </recommendedName>
    <alternativeName>
        <fullName evidence="1">ATP synthase F(0) sector subunit b</fullName>
    </alternativeName>
    <alternativeName>
        <fullName evidence="1">ATPase subunit I</fullName>
    </alternativeName>
    <alternativeName>
        <fullName evidence="1">F-type ATPase subunit b</fullName>
        <shortName evidence="1">F-ATPase subunit b</shortName>
    </alternativeName>
</protein>
<sequence>MDITFTIFAQSLAFAALIWIVATKIWPPLIKVIEERQQKIAEGLAAADLGQKELAQAQEEIKKTLKNAREKANEIIEQAHARAHQIIEAAKAEAITETNRQQNLAQVEIEAAAKRAREELRKHVSILAVNGAEKLLKREIDVNTHKMLLDELAAEI</sequence>
<feature type="chain" id="PRO_0000368874" description="ATP synthase subunit b">
    <location>
        <begin position="1"/>
        <end position="156"/>
    </location>
</feature>
<feature type="transmembrane region" description="Helical" evidence="1">
    <location>
        <begin position="3"/>
        <end position="23"/>
    </location>
</feature>
<comment type="function">
    <text evidence="1">F(1)F(0) ATP synthase produces ATP from ADP in the presence of a proton or sodium gradient. F-type ATPases consist of two structural domains, F(1) containing the extramembraneous catalytic core and F(0) containing the membrane proton channel, linked together by a central stalk and a peripheral stalk. During catalysis, ATP synthesis in the catalytic domain of F(1) is coupled via a rotary mechanism of the central stalk subunits to proton translocation.</text>
</comment>
<comment type="function">
    <text evidence="1">Component of the F(0) channel, it forms part of the peripheral stalk, linking F(1) to F(0).</text>
</comment>
<comment type="subunit">
    <text evidence="1">F-type ATPases have 2 components, F(1) - the catalytic core - and F(0) - the membrane proton channel. F(1) has five subunits: alpha(3), beta(3), gamma(1), delta(1), epsilon(1). F(0) has three main subunits: a(1), b(2) and c(10-14). The alpha and beta chains form an alternating ring which encloses part of the gamma chain. F(1) is attached to F(0) by a central stalk formed by the gamma and epsilon chains, while a peripheral stalk is formed by the delta and b chains.</text>
</comment>
<comment type="subcellular location">
    <subcellularLocation>
        <location evidence="1">Cell inner membrane</location>
        <topology evidence="1">Single-pass membrane protein</topology>
    </subcellularLocation>
</comment>
<comment type="similarity">
    <text evidence="1">Belongs to the ATPase B chain family.</text>
</comment>
<name>ATPF_XYLFA</name>
<evidence type="ECO:0000255" key="1">
    <source>
        <dbReference type="HAMAP-Rule" id="MF_01398"/>
    </source>
</evidence>
<proteinExistence type="inferred from homology"/>
<dbReference type="EMBL" id="AE003849">
    <property type="protein sequence ID" value="AAF83957.1"/>
    <property type="molecule type" value="Genomic_DNA"/>
</dbReference>
<dbReference type="PIR" id="C82716">
    <property type="entry name" value="C82716"/>
</dbReference>
<dbReference type="RefSeq" id="WP_010893664.1">
    <property type="nucleotide sequence ID" value="NC_002488.3"/>
</dbReference>
<dbReference type="SMR" id="Q9PE81"/>
<dbReference type="STRING" id="160492.XF_1147"/>
<dbReference type="KEGG" id="xfa:XF_1147"/>
<dbReference type="eggNOG" id="COG0711">
    <property type="taxonomic scope" value="Bacteria"/>
</dbReference>
<dbReference type="HOGENOM" id="CLU_079215_4_5_6"/>
<dbReference type="Proteomes" id="UP000000812">
    <property type="component" value="Chromosome"/>
</dbReference>
<dbReference type="GO" id="GO:0005886">
    <property type="term" value="C:plasma membrane"/>
    <property type="evidence" value="ECO:0007669"/>
    <property type="project" value="UniProtKB-SubCell"/>
</dbReference>
<dbReference type="GO" id="GO:0045259">
    <property type="term" value="C:proton-transporting ATP synthase complex"/>
    <property type="evidence" value="ECO:0007669"/>
    <property type="project" value="UniProtKB-KW"/>
</dbReference>
<dbReference type="GO" id="GO:0046933">
    <property type="term" value="F:proton-transporting ATP synthase activity, rotational mechanism"/>
    <property type="evidence" value="ECO:0007669"/>
    <property type="project" value="UniProtKB-UniRule"/>
</dbReference>
<dbReference type="GO" id="GO:0046961">
    <property type="term" value="F:proton-transporting ATPase activity, rotational mechanism"/>
    <property type="evidence" value="ECO:0007669"/>
    <property type="project" value="TreeGrafter"/>
</dbReference>
<dbReference type="CDD" id="cd06503">
    <property type="entry name" value="ATP-synt_Fo_b"/>
    <property type="match status" value="1"/>
</dbReference>
<dbReference type="Gene3D" id="6.10.250.1580">
    <property type="match status" value="1"/>
</dbReference>
<dbReference type="HAMAP" id="MF_01398">
    <property type="entry name" value="ATP_synth_b_bprime"/>
    <property type="match status" value="1"/>
</dbReference>
<dbReference type="InterPro" id="IPR028987">
    <property type="entry name" value="ATP_synth_B-like_membr_sf"/>
</dbReference>
<dbReference type="InterPro" id="IPR002146">
    <property type="entry name" value="ATP_synth_b/b'su_bac/chlpt"/>
</dbReference>
<dbReference type="InterPro" id="IPR005864">
    <property type="entry name" value="ATP_synth_F0_bsu_bac"/>
</dbReference>
<dbReference type="InterPro" id="IPR050059">
    <property type="entry name" value="ATP_synthase_B_chain"/>
</dbReference>
<dbReference type="NCBIfam" id="TIGR01144">
    <property type="entry name" value="ATP_synt_b"/>
    <property type="match status" value="1"/>
</dbReference>
<dbReference type="NCBIfam" id="NF004411">
    <property type="entry name" value="PRK05759.1-2"/>
    <property type="match status" value="1"/>
</dbReference>
<dbReference type="PANTHER" id="PTHR33445:SF1">
    <property type="entry name" value="ATP SYNTHASE SUBUNIT B"/>
    <property type="match status" value="1"/>
</dbReference>
<dbReference type="PANTHER" id="PTHR33445">
    <property type="entry name" value="ATP SYNTHASE SUBUNIT B', CHLOROPLASTIC"/>
    <property type="match status" value="1"/>
</dbReference>
<dbReference type="Pfam" id="PF00430">
    <property type="entry name" value="ATP-synt_B"/>
    <property type="match status" value="1"/>
</dbReference>
<dbReference type="SUPFAM" id="SSF81573">
    <property type="entry name" value="F1F0 ATP synthase subunit B, membrane domain"/>
    <property type="match status" value="1"/>
</dbReference>
<reference key="1">
    <citation type="journal article" date="2000" name="Nature">
        <title>The genome sequence of the plant pathogen Xylella fastidiosa.</title>
        <authorList>
            <person name="Simpson A.J.G."/>
            <person name="Reinach F.C."/>
            <person name="Arruda P."/>
            <person name="Abreu F.A."/>
            <person name="Acencio M."/>
            <person name="Alvarenga R."/>
            <person name="Alves L.M.C."/>
            <person name="Araya J.E."/>
            <person name="Baia G.S."/>
            <person name="Baptista C.S."/>
            <person name="Barros M.H."/>
            <person name="Bonaccorsi E.D."/>
            <person name="Bordin S."/>
            <person name="Bove J.M."/>
            <person name="Briones M.R.S."/>
            <person name="Bueno M.R.P."/>
            <person name="Camargo A.A."/>
            <person name="Camargo L.E.A."/>
            <person name="Carraro D.M."/>
            <person name="Carrer H."/>
            <person name="Colauto N.B."/>
            <person name="Colombo C."/>
            <person name="Costa F.F."/>
            <person name="Costa M.C.R."/>
            <person name="Costa-Neto C.M."/>
            <person name="Coutinho L.L."/>
            <person name="Cristofani M."/>
            <person name="Dias-Neto E."/>
            <person name="Docena C."/>
            <person name="El-Dorry H."/>
            <person name="Facincani A.P."/>
            <person name="Ferreira A.J.S."/>
            <person name="Ferreira V.C.A."/>
            <person name="Ferro J.A."/>
            <person name="Fraga J.S."/>
            <person name="Franca S.C."/>
            <person name="Franco M.C."/>
            <person name="Frohme M."/>
            <person name="Furlan L.R."/>
            <person name="Garnier M."/>
            <person name="Goldman G.H."/>
            <person name="Goldman M.H.S."/>
            <person name="Gomes S.L."/>
            <person name="Gruber A."/>
            <person name="Ho P.L."/>
            <person name="Hoheisel J.D."/>
            <person name="Junqueira M.L."/>
            <person name="Kemper E.L."/>
            <person name="Kitajima J.P."/>
            <person name="Krieger J.E."/>
            <person name="Kuramae E.E."/>
            <person name="Laigret F."/>
            <person name="Lambais M.R."/>
            <person name="Leite L.C.C."/>
            <person name="Lemos E.G.M."/>
            <person name="Lemos M.V.F."/>
            <person name="Lopes S.A."/>
            <person name="Lopes C.R."/>
            <person name="Machado J.A."/>
            <person name="Machado M.A."/>
            <person name="Madeira A.M.B.N."/>
            <person name="Madeira H.M.F."/>
            <person name="Marino C.L."/>
            <person name="Marques M.V."/>
            <person name="Martins E.A.L."/>
            <person name="Martins E.M.F."/>
            <person name="Matsukuma A.Y."/>
            <person name="Menck C.F.M."/>
            <person name="Miracca E.C."/>
            <person name="Miyaki C.Y."/>
            <person name="Monteiro-Vitorello C.B."/>
            <person name="Moon D.H."/>
            <person name="Nagai M.A."/>
            <person name="Nascimento A.L.T.O."/>
            <person name="Netto L.E.S."/>
            <person name="Nhani A. Jr."/>
            <person name="Nobrega F.G."/>
            <person name="Nunes L.R."/>
            <person name="Oliveira M.A."/>
            <person name="de Oliveira M.C."/>
            <person name="de Oliveira R.C."/>
            <person name="Palmieri D.A."/>
            <person name="Paris A."/>
            <person name="Peixoto B.R."/>
            <person name="Pereira G.A.G."/>
            <person name="Pereira H.A. Jr."/>
            <person name="Pesquero J.B."/>
            <person name="Quaggio R.B."/>
            <person name="Roberto P.G."/>
            <person name="Rodrigues V."/>
            <person name="de Rosa A.J.M."/>
            <person name="de Rosa V.E. Jr."/>
            <person name="de Sa R.G."/>
            <person name="Santelli R.V."/>
            <person name="Sawasaki H.E."/>
            <person name="da Silva A.C.R."/>
            <person name="da Silva A.M."/>
            <person name="da Silva F.R."/>
            <person name="Silva W.A. Jr."/>
            <person name="da Silveira J.F."/>
            <person name="Silvestri M.L.Z."/>
            <person name="Siqueira W.J."/>
            <person name="de Souza A.A."/>
            <person name="de Souza A.P."/>
            <person name="Terenzi M.F."/>
            <person name="Truffi D."/>
            <person name="Tsai S.M."/>
            <person name="Tsuhako M.H."/>
            <person name="Vallada H."/>
            <person name="Van Sluys M.A."/>
            <person name="Verjovski-Almeida S."/>
            <person name="Vettore A.L."/>
            <person name="Zago M.A."/>
            <person name="Zatz M."/>
            <person name="Meidanis J."/>
            <person name="Setubal J.C."/>
        </authorList>
    </citation>
    <scope>NUCLEOTIDE SEQUENCE [LARGE SCALE GENOMIC DNA]</scope>
    <source>
        <strain>9a5c</strain>
    </source>
</reference>
<accession>Q9PE81</accession>